<dbReference type="EC" id="2.7.2.15" evidence="1"/>
<dbReference type="EMBL" id="U89718">
    <property type="protein sequence ID" value="AAB53419.1"/>
    <property type="molecule type" value="Genomic_DNA"/>
</dbReference>
<dbReference type="EMBL" id="AE006468">
    <property type="protein sequence ID" value="AAL22115.1"/>
    <property type="molecule type" value="Genomic_DNA"/>
</dbReference>
<dbReference type="RefSeq" id="NP_462156.1">
    <property type="nucleotide sequence ID" value="NC_003197.2"/>
</dbReference>
<dbReference type="RefSeq" id="WP_001001853.1">
    <property type="nucleotide sequence ID" value="NC_003197.2"/>
</dbReference>
<dbReference type="PDB" id="1X3M">
    <property type="method" value="X-ray"/>
    <property type="resolution" value="2.20 A"/>
    <property type="chains" value="A=2-402"/>
</dbReference>
<dbReference type="PDB" id="1X3N">
    <property type="method" value="X-ray"/>
    <property type="resolution" value="2.30 A"/>
    <property type="chains" value="A=2-402"/>
</dbReference>
<dbReference type="PDB" id="2E1Y">
    <property type="method" value="X-ray"/>
    <property type="resolution" value="2.60 A"/>
    <property type="chains" value="A=2-402"/>
</dbReference>
<dbReference type="PDB" id="2E1Z">
    <property type="method" value="X-ray"/>
    <property type="resolution" value="1.98 A"/>
    <property type="chains" value="A=2-402"/>
</dbReference>
<dbReference type="PDB" id="2E20">
    <property type="method" value="X-ray"/>
    <property type="resolution" value="2.40 A"/>
    <property type="chains" value="A=2-402"/>
</dbReference>
<dbReference type="PDB" id="4FWK">
    <property type="method" value="X-ray"/>
    <property type="resolution" value="2.80 A"/>
    <property type="chains" value="A=2-402"/>
</dbReference>
<dbReference type="PDB" id="4FWL">
    <property type="method" value="X-ray"/>
    <property type="resolution" value="2.40 A"/>
    <property type="chains" value="A=2-397"/>
</dbReference>
<dbReference type="PDB" id="4FWM">
    <property type="method" value="X-ray"/>
    <property type="resolution" value="2.95 A"/>
    <property type="chains" value="A=2-397"/>
</dbReference>
<dbReference type="PDB" id="4FWN">
    <property type="method" value="X-ray"/>
    <property type="resolution" value="3.00 A"/>
    <property type="chains" value="A=2-402"/>
</dbReference>
<dbReference type="PDB" id="4FWO">
    <property type="method" value="X-ray"/>
    <property type="resolution" value="2.90 A"/>
    <property type="chains" value="A=2-402"/>
</dbReference>
<dbReference type="PDB" id="4FWP">
    <property type="method" value="X-ray"/>
    <property type="resolution" value="2.50 A"/>
    <property type="chains" value="A=2-402"/>
</dbReference>
<dbReference type="PDB" id="4FWQ">
    <property type="method" value="X-ray"/>
    <property type="resolution" value="2.65 A"/>
    <property type="chains" value="A=2-402"/>
</dbReference>
<dbReference type="PDB" id="4FWR">
    <property type="method" value="X-ray"/>
    <property type="resolution" value="3.00 A"/>
    <property type="chains" value="A=2-402"/>
</dbReference>
<dbReference type="PDB" id="4FWS">
    <property type="method" value="X-ray"/>
    <property type="resolution" value="2.69 A"/>
    <property type="chains" value="A=2-402"/>
</dbReference>
<dbReference type="PDB" id="4XH1">
    <property type="method" value="X-ray"/>
    <property type="resolution" value="2.00 A"/>
    <property type="chains" value="A=2-397"/>
</dbReference>
<dbReference type="PDB" id="4XH4">
    <property type="method" value="X-ray"/>
    <property type="resolution" value="1.80 A"/>
    <property type="chains" value="A=1-402"/>
</dbReference>
<dbReference type="PDB" id="4XH5">
    <property type="method" value="X-ray"/>
    <property type="resolution" value="2.11 A"/>
    <property type="chains" value="A=4-397"/>
</dbReference>
<dbReference type="PDBsum" id="1X3M"/>
<dbReference type="PDBsum" id="1X3N"/>
<dbReference type="PDBsum" id="2E1Y"/>
<dbReference type="PDBsum" id="2E1Z"/>
<dbReference type="PDBsum" id="2E20"/>
<dbReference type="PDBsum" id="4FWK"/>
<dbReference type="PDBsum" id="4FWL"/>
<dbReference type="PDBsum" id="4FWM"/>
<dbReference type="PDBsum" id="4FWN"/>
<dbReference type="PDBsum" id="4FWO"/>
<dbReference type="PDBsum" id="4FWP"/>
<dbReference type="PDBsum" id="4FWQ"/>
<dbReference type="PDBsum" id="4FWR"/>
<dbReference type="PDBsum" id="4FWS"/>
<dbReference type="PDBsum" id="4XH1"/>
<dbReference type="PDBsum" id="4XH4"/>
<dbReference type="PDBsum" id="4XH5"/>
<dbReference type="SMR" id="O06961"/>
<dbReference type="STRING" id="99287.STM3242"/>
<dbReference type="PaxDb" id="99287-STM3242"/>
<dbReference type="GeneID" id="1254765"/>
<dbReference type="KEGG" id="stm:STM3242"/>
<dbReference type="PATRIC" id="fig|99287.12.peg.3438"/>
<dbReference type="HOGENOM" id="CLU_020352_0_1_6"/>
<dbReference type="OMA" id="QTMPEKN"/>
<dbReference type="PhylomeDB" id="O06961"/>
<dbReference type="BioCyc" id="SENT99287:STM3242-MONOMER"/>
<dbReference type="BRENDA" id="2.7.2.15">
    <property type="organism ID" value="5542"/>
</dbReference>
<dbReference type="SABIO-RK" id="O06961"/>
<dbReference type="UniPathway" id="UPA00052">
    <property type="reaction ID" value="UER00510"/>
</dbReference>
<dbReference type="EvolutionaryTrace" id="O06961"/>
<dbReference type="Proteomes" id="UP000001014">
    <property type="component" value="Chromosome"/>
</dbReference>
<dbReference type="GO" id="GO:0005829">
    <property type="term" value="C:cytosol"/>
    <property type="evidence" value="ECO:0000318"/>
    <property type="project" value="GO_Central"/>
</dbReference>
<dbReference type="GO" id="GO:0008776">
    <property type="term" value="F:acetate kinase activity"/>
    <property type="evidence" value="ECO:0000318"/>
    <property type="project" value="GO_Central"/>
</dbReference>
<dbReference type="GO" id="GO:0005524">
    <property type="term" value="F:ATP binding"/>
    <property type="evidence" value="ECO:0007669"/>
    <property type="project" value="UniProtKB-KW"/>
</dbReference>
<dbReference type="GO" id="GO:0046872">
    <property type="term" value="F:metal ion binding"/>
    <property type="evidence" value="ECO:0007669"/>
    <property type="project" value="UniProtKB-KW"/>
</dbReference>
<dbReference type="GO" id="GO:0008980">
    <property type="term" value="F:propionate kinase activity"/>
    <property type="evidence" value="ECO:0007669"/>
    <property type="project" value="UniProtKB-UniRule"/>
</dbReference>
<dbReference type="GO" id="GO:0006083">
    <property type="term" value="P:acetate metabolic process"/>
    <property type="evidence" value="ECO:0000318"/>
    <property type="project" value="GO_Central"/>
</dbReference>
<dbReference type="GO" id="GO:0070689">
    <property type="term" value="P:L-threonine catabolic process to propionate"/>
    <property type="evidence" value="ECO:0007669"/>
    <property type="project" value="UniProtKB-UniRule"/>
</dbReference>
<dbReference type="CDD" id="cd24010">
    <property type="entry name" value="ASKHA_NBD_AcK_PK"/>
    <property type="match status" value="1"/>
</dbReference>
<dbReference type="Gene3D" id="3.30.420.40">
    <property type="match status" value="2"/>
</dbReference>
<dbReference type="HAMAP" id="MF_00020">
    <property type="entry name" value="Acetate_kinase"/>
    <property type="match status" value="1"/>
</dbReference>
<dbReference type="HAMAP" id="MF_01881">
    <property type="entry name" value="Propion_kin_subfam1"/>
    <property type="match status" value="1"/>
</dbReference>
<dbReference type="InterPro" id="IPR004372">
    <property type="entry name" value="Ac/propionate_kinase"/>
</dbReference>
<dbReference type="InterPro" id="IPR000890">
    <property type="entry name" value="Aliphatic_acid_kin_short-chain"/>
</dbReference>
<dbReference type="InterPro" id="IPR023865">
    <property type="entry name" value="Aliphatic_acid_kinase_CS"/>
</dbReference>
<dbReference type="InterPro" id="IPR043129">
    <property type="entry name" value="ATPase_NBD"/>
</dbReference>
<dbReference type="InterPro" id="IPR024917">
    <property type="entry name" value="Propionate_kinase"/>
</dbReference>
<dbReference type="NCBIfam" id="TIGR00016">
    <property type="entry name" value="ackA"/>
    <property type="match status" value="1"/>
</dbReference>
<dbReference type="NCBIfam" id="NF009045">
    <property type="entry name" value="PRK12379.1"/>
    <property type="match status" value="1"/>
</dbReference>
<dbReference type="PANTHER" id="PTHR21060">
    <property type="entry name" value="ACETATE KINASE"/>
    <property type="match status" value="1"/>
</dbReference>
<dbReference type="PANTHER" id="PTHR21060:SF17">
    <property type="entry name" value="PROPIONATE KINASE"/>
    <property type="match status" value="1"/>
</dbReference>
<dbReference type="Pfam" id="PF00871">
    <property type="entry name" value="Acetate_kinase"/>
    <property type="match status" value="1"/>
</dbReference>
<dbReference type="PIRSF" id="PIRSF000722">
    <property type="entry name" value="Acetate_prop_kin"/>
    <property type="match status" value="1"/>
</dbReference>
<dbReference type="PRINTS" id="PR00471">
    <property type="entry name" value="ACETATEKNASE"/>
</dbReference>
<dbReference type="SUPFAM" id="SSF53067">
    <property type="entry name" value="Actin-like ATPase domain"/>
    <property type="match status" value="2"/>
</dbReference>
<dbReference type="PROSITE" id="PS01075">
    <property type="entry name" value="ACETATE_KINASE_1"/>
    <property type="match status" value="1"/>
</dbReference>
<dbReference type="PROSITE" id="PS01076">
    <property type="entry name" value="ACETATE_KINASE_2"/>
    <property type="match status" value="1"/>
</dbReference>
<evidence type="ECO:0000255" key="1">
    <source>
        <dbReference type="HAMAP-Rule" id="MF_01881"/>
    </source>
</evidence>
<evidence type="ECO:0000269" key="2">
    <source>
    </source>
</evidence>
<evidence type="ECO:0000305" key="3"/>
<evidence type="ECO:0007829" key="4">
    <source>
        <dbReference type="PDB" id="1X3M"/>
    </source>
</evidence>
<evidence type="ECO:0007829" key="5">
    <source>
        <dbReference type="PDB" id="2E20"/>
    </source>
</evidence>
<evidence type="ECO:0007829" key="6">
    <source>
        <dbReference type="PDB" id="4XH4"/>
    </source>
</evidence>
<proteinExistence type="evidence at protein level"/>
<gene>
    <name evidence="1" type="primary">tdcD</name>
    <name type="synonym">oxd-2</name>
    <name type="ordered locus">STM3242</name>
</gene>
<sequence>MNEFPVVLVINCGSSSIKFSVLDVATCDVLMAGIADGMNTENAFLSINGDKPINLAHSNYEDALKAIAFELEKRDLTDSVALIGHRIAHGGELFTQSVIITDEIIDNIRRVSPLAPLHNYANLSGIDAARHLFPAVRQVAVFDTSFHQTLAPEAYLYGLPWEYFSSLGVRRYGFHGTSHRYVSRRAYELLDLDEKDSGLIVAHLGNGASICAVRNGQSVDTSMGMTPLEGLMMGTRSGDVDFGAMAWIAKETGQTLSDLERVVNKESGLLGISGLSSDLRVLEKAWHEGHERARLAIKTFVHRIARHIAGHAASLHRLDGIIFTGGIGENSVLIRQLVIEHLGVLGLTLDVEMNKQPNSHGERIISANPSQVICAVIPTNEEKMIALDAIHLGNVKAPVEFA</sequence>
<feature type="chain" id="PRO_0000107656" description="Propionate kinase">
    <location>
        <begin position="1"/>
        <end position="402"/>
    </location>
</feature>
<feature type="active site" description="Proton donor/acceptor" evidence="1">
    <location>
        <position position="143"/>
    </location>
</feature>
<feature type="binding site">
    <location>
        <position position="11"/>
    </location>
    <ligand>
        <name>ATP</name>
        <dbReference type="ChEBI" id="CHEBI:30616"/>
    </ligand>
</feature>
<feature type="binding site" evidence="1">
    <location>
        <position position="11"/>
    </location>
    <ligand>
        <name>Mg(2+)</name>
        <dbReference type="ChEBI" id="CHEBI:18420"/>
    </ligand>
</feature>
<feature type="binding site" evidence="1">
    <location>
        <position position="18"/>
    </location>
    <ligand>
        <name>ATP</name>
        <dbReference type="ChEBI" id="CHEBI:30616"/>
    </ligand>
</feature>
<feature type="binding site" evidence="1">
    <location>
        <position position="86"/>
    </location>
    <ligand>
        <name>substrate</name>
    </ligand>
</feature>
<feature type="binding site">
    <location>
        <position position="175"/>
    </location>
    <ligand>
        <name>ATP</name>
        <dbReference type="ChEBI" id="CHEBI:30616"/>
    </ligand>
</feature>
<feature type="binding site">
    <location>
        <begin position="203"/>
        <end position="207"/>
    </location>
    <ligand>
        <name>ATP</name>
        <dbReference type="ChEBI" id="CHEBI:30616"/>
    </ligand>
</feature>
<feature type="binding site">
    <location>
        <begin position="278"/>
        <end position="280"/>
    </location>
    <ligand>
        <name>ATP</name>
        <dbReference type="ChEBI" id="CHEBI:30616"/>
    </ligand>
</feature>
<feature type="binding site" evidence="1">
    <location>
        <begin position="326"/>
        <end position="330"/>
    </location>
    <ligand>
        <name>ATP</name>
        <dbReference type="ChEBI" id="CHEBI:30616"/>
    </ligand>
</feature>
<feature type="binding site" evidence="1">
    <location>
        <position position="381"/>
    </location>
    <ligand>
        <name>Mg(2+)</name>
        <dbReference type="ChEBI" id="CHEBI:18420"/>
    </ligand>
</feature>
<feature type="site" description="Transition state stabilizer" evidence="1">
    <location>
        <position position="175"/>
    </location>
</feature>
<feature type="site" description="Transition state stabilizer" evidence="1">
    <location>
        <position position="236"/>
    </location>
</feature>
<feature type="sequence conflict" description="In Ref. 1; AAB53419." evidence="3" ref="1">
    <original>AVRQVAVF</original>
    <variation>GRASGGGI</variation>
    <location>
        <begin position="135"/>
        <end position="142"/>
    </location>
</feature>
<feature type="strand" evidence="6">
    <location>
        <begin position="6"/>
        <end position="12"/>
    </location>
</feature>
<feature type="strand" evidence="6">
    <location>
        <begin position="17"/>
        <end position="23"/>
    </location>
</feature>
<feature type="turn" evidence="6">
    <location>
        <begin position="24"/>
        <end position="26"/>
    </location>
</feature>
<feature type="strand" evidence="6">
    <location>
        <begin position="29"/>
        <end position="37"/>
    </location>
</feature>
<feature type="strand" evidence="6">
    <location>
        <begin position="40"/>
        <end position="48"/>
    </location>
</feature>
<feature type="strand" evidence="6">
    <location>
        <begin position="53"/>
        <end position="57"/>
    </location>
</feature>
<feature type="helix" evidence="6">
    <location>
        <begin position="60"/>
        <end position="73"/>
    </location>
</feature>
<feature type="helix" evidence="6">
    <location>
        <begin position="77"/>
        <end position="79"/>
    </location>
</feature>
<feature type="strand" evidence="6">
    <location>
        <begin position="80"/>
        <end position="88"/>
    </location>
</feature>
<feature type="turn" evidence="6">
    <location>
        <begin position="91"/>
        <end position="93"/>
    </location>
</feature>
<feature type="helix" evidence="6">
    <location>
        <begin position="102"/>
        <end position="111"/>
    </location>
</feature>
<feature type="helix" evidence="6">
    <location>
        <begin position="112"/>
        <end position="114"/>
    </location>
</feature>
<feature type="helix" evidence="6">
    <location>
        <begin position="116"/>
        <end position="132"/>
    </location>
</feature>
<feature type="strand" evidence="6">
    <location>
        <begin position="136"/>
        <end position="142"/>
    </location>
</feature>
<feature type="helix" evidence="6">
    <location>
        <begin position="145"/>
        <end position="149"/>
    </location>
</feature>
<feature type="helix" evidence="6">
    <location>
        <begin position="152"/>
        <end position="155"/>
    </location>
</feature>
<feature type="helix" evidence="6">
    <location>
        <begin position="161"/>
        <end position="167"/>
    </location>
</feature>
<feature type="helix" evidence="6">
    <location>
        <begin position="176"/>
        <end position="190"/>
    </location>
</feature>
<feature type="helix" evidence="4">
    <location>
        <begin position="194"/>
        <end position="196"/>
    </location>
</feature>
<feature type="strand" evidence="6">
    <location>
        <begin position="198"/>
        <end position="214"/>
    </location>
</feature>
<feature type="strand" evidence="6">
    <location>
        <begin position="217"/>
        <end position="222"/>
    </location>
</feature>
<feature type="strand" evidence="6">
    <location>
        <begin position="229"/>
        <end position="231"/>
    </location>
</feature>
<feature type="helix" evidence="6">
    <location>
        <begin position="242"/>
        <end position="252"/>
    </location>
</feature>
<feature type="helix" evidence="6">
    <location>
        <begin position="256"/>
        <end position="265"/>
    </location>
</feature>
<feature type="helix" evidence="6">
    <location>
        <begin position="268"/>
        <end position="273"/>
    </location>
</feature>
<feature type="helix" evidence="6">
    <location>
        <begin position="279"/>
        <end position="287"/>
    </location>
</feature>
<feature type="helix" evidence="6">
    <location>
        <begin position="291"/>
        <end position="312"/>
    </location>
</feature>
<feature type="strand" evidence="5">
    <location>
        <begin position="315"/>
        <end position="317"/>
    </location>
</feature>
<feature type="strand" evidence="6">
    <location>
        <begin position="320"/>
        <end position="324"/>
    </location>
</feature>
<feature type="helix" evidence="6">
    <location>
        <begin position="325"/>
        <end position="330"/>
    </location>
</feature>
<feature type="helix" evidence="6">
    <location>
        <begin position="332"/>
        <end position="340"/>
    </location>
</feature>
<feature type="helix" evidence="6">
    <location>
        <begin position="341"/>
        <end position="345"/>
    </location>
</feature>
<feature type="helix" evidence="6">
    <location>
        <begin position="351"/>
        <end position="355"/>
    </location>
</feature>
<feature type="helix" evidence="6">
    <location>
        <begin position="358"/>
        <end position="360"/>
    </location>
</feature>
<feature type="strand" evidence="6">
    <location>
        <begin position="362"/>
        <end position="364"/>
    </location>
</feature>
<feature type="strand" evidence="6">
    <location>
        <begin position="371"/>
        <end position="376"/>
    </location>
</feature>
<feature type="helix" evidence="6">
    <location>
        <begin position="381"/>
        <end position="392"/>
    </location>
</feature>
<reference key="1">
    <citation type="journal article" date="1999" name="J. Bacteriol.">
        <title>Characterization of a group of anaerobically induced, fnr-dependent genes of Salmonella typhimurium.</title>
        <authorList>
            <person name="Wei Y."/>
            <person name="Miller C.G."/>
        </authorList>
    </citation>
    <scope>NUCLEOTIDE SEQUENCE [GENOMIC DNA]</scope>
    <source>
        <strain>LT2</strain>
    </source>
</reference>
<reference key="2">
    <citation type="journal article" date="2001" name="Nature">
        <title>Complete genome sequence of Salmonella enterica serovar Typhimurium LT2.</title>
        <authorList>
            <person name="McClelland M."/>
            <person name="Sanderson K.E."/>
            <person name="Spieth J."/>
            <person name="Clifton S.W."/>
            <person name="Latreille P."/>
            <person name="Courtney L."/>
            <person name="Porwollik S."/>
            <person name="Ali J."/>
            <person name="Dante M."/>
            <person name="Du F."/>
            <person name="Hou S."/>
            <person name="Layman D."/>
            <person name="Leonard S."/>
            <person name="Nguyen C."/>
            <person name="Scott K."/>
            <person name="Holmes A."/>
            <person name="Grewal N."/>
            <person name="Mulvaney E."/>
            <person name="Ryan E."/>
            <person name="Sun H."/>
            <person name="Florea L."/>
            <person name="Miller W."/>
            <person name="Stoneking T."/>
            <person name="Nhan M."/>
            <person name="Waterston R."/>
            <person name="Wilson R.K."/>
        </authorList>
    </citation>
    <scope>NUCLEOTIDE SEQUENCE [LARGE SCALE GENOMIC DNA]</scope>
    <source>
        <strain>LT2 / SGSC1412 / ATCC 700720</strain>
    </source>
</reference>
<reference key="3">
    <citation type="journal article" date="2005" name="J. Mol. Biol.">
        <title>Crystal structures of ADP and AMPPNP-bound propionate kinase (TdcD) from Salmonella typhimurium: comparison with members of acetate and sugar kinase/heat shock cognate 70/actin superfamily.</title>
        <authorList>
            <person name="Simanshu D.K."/>
            <person name="Savithri H.S."/>
            <person name="Murthy M.R."/>
        </authorList>
    </citation>
    <scope>X-RAY CRYSTALLOGRAPHY (2.2 ANGSTROMS) IN COMPLEXES WITH ATP ANALOGS</scope>
    <scope>SUBUNIT</scope>
    <scope>BIOPHYSICOCHEMICAL PROPERTIES</scope>
</reference>
<reference key="4">
    <citation type="journal article" date="2008" name="Proteins">
        <title>Crystal structures of Salmonella typhimurium propionate kinase and its complex with Ap4A: evidence for a novel Ap4A synthetic activity.</title>
        <authorList>
            <person name="Simanshu D.K."/>
            <person name="Savithri H.S."/>
            <person name="Murthy M.R."/>
        </authorList>
    </citation>
    <scope>X-RAY CRYSTALLOGRAPHY (2.6 ANGSTROMS) IN COMPLEXES WITH ATP ANALOGS</scope>
</reference>
<protein>
    <recommendedName>
        <fullName evidence="1">Propionate kinase</fullName>
        <ecNumber evidence="1">2.7.2.15</ecNumber>
    </recommendedName>
</protein>
<keyword id="KW-0002">3D-structure</keyword>
<keyword id="KW-0067">ATP-binding</keyword>
<keyword id="KW-0418">Kinase</keyword>
<keyword id="KW-0460">Magnesium</keyword>
<keyword id="KW-0479">Metal-binding</keyword>
<keyword id="KW-0547">Nucleotide-binding</keyword>
<keyword id="KW-1185">Reference proteome</keyword>
<keyword id="KW-0808">Transferase</keyword>
<accession>O06961</accession>
<name>TDCD_SALTY</name>
<organism>
    <name type="scientific">Salmonella typhimurium (strain LT2 / SGSC1412 / ATCC 700720)</name>
    <dbReference type="NCBI Taxonomy" id="99287"/>
    <lineage>
        <taxon>Bacteria</taxon>
        <taxon>Pseudomonadati</taxon>
        <taxon>Pseudomonadota</taxon>
        <taxon>Gammaproteobacteria</taxon>
        <taxon>Enterobacterales</taxon>
        <taxon>Enterobacteriaceae</taxon>
        <taxon>Salmonella</taxon>
    </lineage>
</organism>
<comment type="function">
    <text>Catalyzes the conversion of propionyl phosphate and ADP to propionate and ATP. It can also use acetyl phosphate as phosphate group acceptor.</text>
</comment>
<comment type="catalytic activity">
    <reaction evidence="1">
        <text>propanoate + ATP = propanoyl phosphate + ADP</text>
        <dbReference type="Rhea" id="RHEA:23148"/>
        <dbReference type="ChEBI" id="CHEBI:17272"/>
        <dbReference type="ChEBI" id="CHEBI:30616"/>
        <dbReference type="ChEBI" id="CHEBI:58933"/>
        <dbReference type="ChEBI" id="CHEBI:456216"/>
        <dbReference type="EC" id="2.7.2.15"/>
    </reaction>
</comment>
<comment type="cofactor">
    <cofactor evidence="1">
        <name>Mg(2+)</name>
        <dbReference type="ChEBI" id="CHEBI:18420"/>
    </cofactor>
</comment>
<comment type="biophysicochemical properties">
    <kinetics>
        <KM evidence="2">112 uM for ATP (at 25 degrees Celsius and pH 7.5)</KM>
        <KM evidence="2">2.3 mM for propionate (at 25 degrees Celsius and pH 7.5)</KM>
        <KM evidence="2">26.9 mM for acetate (at 25 degrees Celsius and pH 7.5)</KM>
    </kinetics>
</comment>
<comment type="pathway">
    <text evidence="1">Amino-acid degradation; L-threonine degradation via propanoate pathway; propanoate from L-threonine: step 4/4.</text>
</comment>
<comment type="subunit">
    <text evidence="1 2">Homodimer.</text>
</comment>
<comment type="similarity">
    <text evidence="1">Belongs to the acetokinase family. TdcD subfamily.</text>
</comment>